<dbReference type="EMBL" id="CR931997">
    <property type="protein sequence ID" value="CAI37219.1"/>
    <property type="molecule type" value="Genomic_DNA"/>
</dbReference>
<dbReference type="RefSeq" id="WP_011273618.1">
    <property type="nucleotide sequence ID" value="NC_007164.1"/>
</dbReference>
<dbReference type="SMR" id="Q4JVD8"/>
<dbReference type="STRING" id="306537.jk1055"/>
<dbReference type="KEGG" id="cjk:jk1055"/>
<dbReference type="PATRIC" id="fig|306537.10.peg.1067"/>
<dbReference type="eggNOG" id="COG0632">
    <property type="taxonomic scope" value="Bacteria"/>
</dbReference>
<dbReference type="HOGENOM" id="CLU_087936_2_1_11"/>
<dbReference type="OrthoDB" id="5293449at2"/>
<dbReference type="Proteomes" id="UP000000545">
    <property type="component" value="Chromosome"/>
</dbReference>
<dbReference type="GO" id="GO:0005737">
    <property type="term" value="C:cytoplasm"/>
    <property type="evidence" value="ECO:0007669"/>
    <property type="project" value="UniProtKB-SubCell"/>
</dbReference>
<dbReference type="GO" id="GO:0009379">
    <property type="term" value="C:Holliday junction helicase complex"/>
    <property type="evidence" value="ECO:0007669"/>
    <property type="project" value="InterPro"/>
</dbReference>
<dbReference type="GO" id="GO:0048476">
    <property type="term" value="C:Holliday junction resolvase complex"/>
    <property type="evidence" value="ECO:0007669"/>
    <property type="project" value="UniProtKB-UniRule"/>
</dbReference>
<dbReference type="GO" id="GO:0005524">
    <property type="term" value="F:ATP binding"/>
    <property type="evidence" value="ECO:0007669"/>
    <property type="project" value="InterPro"/>
</dbReference>
<dbReference type="GO" id="GO:0000400">
    <property type="term" value="F:four-way junction DNA binding"/>
    <property type="evidence" value="ECO:0007669"/>
    <property type="project" value="UniProtKB-UniRule"/>
</dbReference>
<dbReference type="GO" id="GO:0009378">
    <property type="term" value="F:four-way junction helicase activity"/>
    <property type="evidence" value="ECO:0007669"/>
    <property type="project" value="InterPro"/>
</dbReference>
<dbReference type="GO" id="GO:0006310">
    <property type="term" value="P:DNA recombination"/>
    <property type="evidence" value="ECO:0007669"/>
    <property type="project" value="UniProtKB-UniRule"/>
</dbReference>
<dbReference type="GO" id="GO:0006281">
    <property type="term" value="P:DNA repair"/>
    <property type="evidence" value="ECO:0007669"/>
    <property type="project" value="UniProtKB-UniRule"/>
</dbReference>
<dbReference type="CDD" id="cd14332">
    <property type="entry name" value="UBA_RuvA_C"/>
    <property type="match status" value="1"/>
</dbReference>
<dbReference type="Gene3D" id="1.10.150.20">
    <property type="entry name" value="5' to 3' exonuclease, C-terminal subdomain"/>
    <property type="match status" value="1"/>
</dbReference>
<dbReference type="Gene3D" id="1.10.8.10">
    <property type="entry name" value="DNA helicase RuvA subunit, C-terminal domain"/>
    <property type="match status" value="1"/>
</dbReference>
<dbReference type="Gene3D" id="2.40.50.140">
    <property type="entry name" value="Nucleic acid-binding proteins"/>
    <property type="match status" value="1"/>
</dbReference>
<dbReference type="HAMAP" id="MF_00031">
    <property type="entry name" value="DNA_HJ_migration_RuvA"/>
    <property type="match status" value="1"/>
</dbReference>
<dbReference type="InterPro" id="IPR013849">
    <property type="entry name" value="DNA_helicase_Holl-junc_RuvA_I"/>
</dbReference>
<dbReference type="InterPro" id="IPR012340">
    <property type="entry name" value="NA-bd_OB-fold"/>
</dbReference>
<dbReference type="InterPro" id="IPR000085">
    <property type="entry name" value="RuvA"/>
</dbReference>
<dbReference type="InterPro" id="IPR010994">
    <property type="entry name" value="RuvA_2-like"/>
</dbReference>
<dbReference type="InterPro" id="IPR011114">
    <property type="entry name" value="RuvA_C"/>
</dbReference>
<dbReference type="InterPro" id="IPR036267">
    <property type="entry name" value="RuvA_C_sf"/>
</dbReference>
<dbReference type="NCBIfam" id="TIGR00084">
    <property type="entry name" value="ruvA"/>
    <property type="match status" value="1"/>
</dbReference>
<dbReference type="Pfam" id="PF14520">
    <property type="entry name" value="HHH_5"/>
    <property type="match status" value="1"/>
</dbReference>
<dbReference type="Pfam" id="PF07499">
    <property type="entry name" value="RuvA_C"/>
    <property type="match status" value="1"/>
</dbReference>
<dbReference type="Pfam" id="PF01330">
    <property type="entry name" value="RuvA_N"/>
    <property type="match status" value="1"/>
</dbReference>
<dbReference type="SUPFAM" id="SSF46929">
    <property type="entry name" value="DNA helicase RuvA subunit, C-terminal domain"/>
    <property type="match status" value="1"/>
</dbReference>
<dbReference type="SUPFAM" id="SSF50249">
    <property type="entry name" value="Nucleic acid-binding proteins"/>
    <property type="match status" value="1"/>
</dbReference>
<dbReference type="SUPFAM" id="SSF47781">
    <property type="entry name" value="RuvA domain 2-like"/>
    <property type="match status" value="1"/>
</dbReference>
<feature type="chain" id="PRO_0000224859" description="Holliday junction branch migration complex subunit RuvA">
    <location>
        <begin position="1"/>
        <end position="211"/>
    </location>
</feature>
<feature type="region of interest" description="Domain I" evidence="1">
    <location>
        <begin position="1"/>
        <end position="63"/>
    </location>
</feature>
<feature type="region of interest" description="Domain II" evidence="1">
    <location>
        <begin position="64"/>
        <end position="142"/>
    </location>
</feature>
<feature type="region of interest" description="Flexible linker" evidence="1">
    <location>
        <begin position="143"/>
        <end position="157"/>
    </location>
</feature>
<feature type="region of interest" description="Domain III" evidence="1">
    <location>
        <begin position="158"/>
        <end position="211"/>
    </location>
</feature>
<accession>Q4JVD8</accession>
<evidence type="ECO:0000255" key="1">
    <source>
        <dbReference type="HAMAP-Rule" id="MF_00031"/>
    </source>
</evidence>
<name>RUVA_CORJK</name>
<comment type="function">
    <text evidence="1">The RuvA-RuvB-RuvC complex processes Holliday junction (HJ) DNA during genetic recombination and DNA repair, while the RuvA-RuvB complex plays an important role in the rescue of blocked DNA replication forks via replication fork reversal (RFR). RuvA specifically binds to HJ cruciform DNA, conferring on it an open structure. The RuvB hexamer acts as an ATP-dependent pump, pulling dsDNA into and through the RuvAB complex. HJ branch migration allows RuvC to scan DNA until it finds its consensus sequence, where it cleaves and resolves the cruciform DNA.</text>
</comment>
<comment type="subunit">
    <text evidence="1">Homotetramer. Forms an RuvA(8)-RuvB(12)-Holliday junction (HJ) complex. HJ DNA is sandwiched between 2 RuvA tetramers; dsDNA enters through RuvA and exits via RuvB. An RuvB hexamer assembles on each DNA strand where it exits the tetramer. Each RuvB hexamer is contacted by two RuvA subunits (via domain III) on 2 adjacent RuvB subunits; this complex drives branch migration. In the full resolvosome a probable DNA-RuvA(4)-RuvB(12)-RuvC(2) complex forms which resolves the HJ.</text>
</comment>
<comment type="subcellular location">
    <subcellularLocation>
        <location evidence="1">Cytoplasm</location>
    </subcellularLocation>
</comment>
<comment type="domain">
    <text evidence="1">Has three domains with a flexible linker between the domains II and III and assumes an 'L' shape. Domain III is highly mobile and contacts RuvB.</text>
</comment>
<comment type="similarity">
    <text evidence="1">Belongs to the RuvA family.</text>
</comment>
<proteinExistence type="inferred from homology"/>
<sequence length="211" mass="21637">MIASLRGTVIDKGLDYVTIECAGVGYQCSGTATTIAELPRGEEVFVTTALVVREDSQTLYVFKDADEKRAFATLQSVSGVGARLALAILSVITPQELARAVSNGDHKTLQRAPGVGKRLAERMAVDLKGKVADLGEIADTGAVGAAGAVGDGGDGQAVAPDVREQVLEALVGLGFTESKAGTTIEAVLSQWSAPQAPDASGLLRASLAAIK</sequence>
<protein>
    <recommendedName>
        <fullName evidence="1">Holliday junction branch migration complex subunit RuvA</fullName>
    </recommendedName>
</protein>
<reference key="1">
    <citation type="journal article" date="2005" name="J. Bacteriol.">
        <title>Complete genome sequence and analysis of the multiresistant nosocomial pathogen Corynebacterium jeikeium K411, a lipid-requiring bacterium of the human skin flora.</title>
        <authorList>
            <person name="Tauch A."/>
            <person name="Kaiser O."/>
            <person name="Hain T."/>
            <person name="Goesmann A."/>
            <person name="Weisshaar B."/>
            <person name="Albersmeier A."/>
            <person name="Bekel T."/>
            <person name="Bischoff N."/>
            <person name="Brune I."/>
            <person name="Chakraborty T."/>
            <person name="Kalinowski J."/>
            <person name="Meyer F."/>
            <person name="Rupp O."/>
            <person name="Schneiker S."/>
            <person name="Viehoever P."/>
            <person name="Puehler A."/>
        </authorList>
    </citation>
    <scope>NUCLEOTIDE SEQUENCE [LARGE SCALE GENOMIC DNA]</scope>
    <source>
        <strain>K411</strain>
    </source>
</reference>
<organism>
    <name type="scientific">Corynebacterium jeikeium (strain K411)</name>
    <dbReference type="NCBI Taxonomy" id="306537"/>
    <lineage>
        <taxon>Bacteria</taxon>
        <taxon>Bacillati</taxon>
        <taxon>Actinomycetota</taxon>
        <taxon>Actinomycetes</taxon>
        <taxon>Mycobacteriales</taxon>
        <taxon>Corynebacteriaceae</taxon>
        <taxon>Corynebacterium</taxon>
    </lineage>
</organism>
<gene>
    <name evidence="1" type="primary">ruvA</name>
    <name type="ordered locus">jk1055</name>
</gene>
<keyword id="KW-0963">Cytoplasm</keyword>
<keyword id="KW-0227">DNA damage</keyword>
<keyword id="KW-0233">DNA recombination</keyword>
<keyword id="KW-0234">DNA repair</keyword>
<keyword id="KW-0238">DNA-binding</keyword>
<keyword id="KW-1185">Reference proteome</keyword>